<accession>Q7KSD8</accession>
<accession>Q4V6Z0</accession>
<accession>Q59DW3</accession>
<accession>Q59DW4</accession>
<accession>Q8I8U8</accession>
<accession>Q8I9F2</accession>
<accession>Q8I9F3</accession>
<accession>Q8IN85</accession>
<protein>
    <recommendedName>
        <fullName>Transcriptional adapter 2A</fullName>
    </recommendedName>
    <alternativeName>
        <fullName>dADA2a</fullName>
    </alternativeName>
</protein>
<proteinExistence type="evidence at protein level"/>
<feature type="chain" id="PRO_0000283733" description="Transcriptional adapter 2A">
    <location>
        <begin position="1"/>
        <end position="562"/>
    </location>
</feature>
<feature type="domain" description="SANT" evidence="1">
    <location>
        <begin position="154"/>
        <end position="198"/>
    </location>
</feature>
<feature type="domain" description="SWIRM" evidence="3">
    <location>
        <begin position="471"/>
        <end position="562"/>
    </location>
</feature>
<feature type="zinc finger region" description="ZZ-type" evidence="2">
    <location>
        <begin position="91"/>
        <end position="146"/>
    </location>
</feature>
<feature type="binding site" evidence="2">
    <location>
        <position position="96"/>
    </location>
    <ligand>
        <name>Zn(2+)</name>
        <dbReference type="ChEBI" id="CHEBI:29105"/>
        <label>1</label>
    </ligand>
</feature>
<feature type="binding site" evidence="2">
    <location>
        <position position="99"/>
    </location>
    <ligand>
        <name>Zn(2+)</name>
        <dbReference type="ChEBI" id="CHEBI:29105"/>
        <label>1</label>
    </ligand>
</feature>
<feature type="binding site" evidence="2">
    <location>
        <position position="110"/>
    </location>
    <ligand>
        <name>Zn(2+)</name>
        <dbReference type="ChEBI" id="CHEBI:29105"/>
        <label>2</label>
    </ligand>
</feature>
<feature type="binding site" evidence="2">
    <location>
        <position position="113"/>
    </location>
    <ligand>
        <name>Zn(2+)</name>
        <dbReference type="ChEBI" id="CHEBI:29105"/>
        <label>2</label>
    </ligand>
</feature>
<feature type="binding site" evidence="2">
    <location>
        <position position="119"/>
    </location>
    <ligand>
        <name>Zn(2+)</name>
        <dbReference type="ChEBI" id="CHEBI:29105"/>
        <label>1</label>
    </ligand>
</feature>
<feature type="binding site" evidence="2">
    <location>
        <position position="122"/>
    </location>
    <ligand>
        <name>Zn(2+)</name>
        <dbReference type="ChEBI" id="CHEBI:29105"/>
        <label>1</label>
    </ligand>
</feature>
<feature type="binding site" evidence="2">
    <location>
        <position position="132"/>
    </location>
    <ligand>
        <name>Zn(2+)</name>
        <dbReference type="ChEBI" id="CHEBI:29105"/>
        <label>2</label>
    </ligand>
</feature>
<feature type="binding site" evidence="2">
    <location>
        <position position="136"/>
    </location>
    <ligand>
        <name>Zn(2+)</name>
        <dbReference type="ChEBI" id="CHEBI:29105"/>
        <label>2</label>
    </ligand>
</feature>
<feature type="splice variant" id="VSP_052368" description="In isoform A and isoform C." evidence="11 12 13">
    <location>
        <begin position="23"/>
        <end position="37"/>
    </location>
</feature>
<feature type="splice variant" id="VSP_052369" description="In isoform C and isoform E." evidence="12 13">
    <location>
        <begin position="464"/>
        <end position="483"/>
    </location>
</feature>
<feature type="sequence conflict" description="In Ref. 1; AAN88029/AAN88030." evidence="14" ref="1">
    <original>S</original>
    <variation>T</variation>
    <location>
        <position position="229"/>
    </location>
</feature>
<feature type="sequence conflict" description="In Ref. 4; AAY51560." evidence="14" ref="4">
    <original>S</original>
    <variation>P</variation>
    <location>
        <position position="284"/>
    </location>
</feature>
<evidence type="ECO:0000255" key="1"/>
<evidence type="ECO:0000255" key="2">
    <source>
        <dbReference type="PROSITE-ProRule" id="PRU00228"/>
    </source>
</evidence>
<evidence type="ECO:0000255" key="3">
    <source>
        <dbReference type="PROSITE-ProRule" id="PRU00247"/>
    </source>
</evidence>
<evidence type="ECO:0000269" key="4">
    <source>
    </source>
</evidence>
<evidence type="ECO:0000269" key="5">
    <source>
    </source>
</evidence>
<evidence type="ECO:0000269" key="6">
    <source>
    </source>
</evidence>
<evidence type="ECO:0000269" key="7">
    <source>
    </source>
</evidence>
<evidence type="ECO:0000269" key="8">
    <source>
    </source>
</evidence>
<evidence type="ECO:0000269" key="9">
    <source>
    </source>
</evidence>
<evidence type="ECO:0000269" key="10">
    <source>
    </source>
</evidence>
<evidence type="ECO:0000303" key="11">
    <source>
    </source>
</evidence>
<evidence type="ECO:0000303" key="12">
    <source>
    </source>
</evidence>
<evidence type="ECO:0000303" key="13">
    <source ref="4"/>
</evidence>
<evidence type="ECO:0000305" key="14"/>
<evidence type="ECO:0000312" key="15">
    <source>
        <dbReference type="EMBL" id="AAN52144.1"/>
    </source>
</evidence>
<evidence type="ECO:0000312" key="16">
    <source>
        <dbReference type="EMBL" id="AAN88029.1"/>
    </source>
</evidence>
<evidence type="ECO:0000312" key="17">
    <source>
        <dbReference type="EMBL" id="AAS65168.1"/>
    </source>
</evidence>
<evidence type="ECO:0000312" key="18">
    <source>
        <dbReference type="EMBL" id="ABF17896.1"/>
    </source>
</evidence>
<evidence type="ECO:0000312" key="19">
    <source>
        <dbReference type="FlyBase" id="FBgn0263738"/>
    </source>
</evidence>
<organism>
    <name type="scientific">Drosophila melanogaster</name>
    <name type="common">Fruit fly</name>
    <dbReference type="NCBI Taxonomy" id="7227"/>
    <lineage>
        <taxon>Eukaryota</taxon>
        <taxon>Metazoa</taxon>
        <taxon>Ecdysozoa</taxon>
        <taxon>Arthropoda</taxon>
        <taxon>Hexapoda</taxon>
        <taxon>Insecta</taxon>
        <taxon>Pterygota</taxon>
        <taxon>Neoptera</taxon>
        <taxon>Endopterygota</taxon>
        <taxon>Diptera</taxon>
        <taxon>Brachycera</taxon>
        <taxon>Muscomorpha</taxon>
        <taxon>Ephydroidea</taxon>
        <taxon>Drosophilidae</taxon>
        <taxon>Drosophila</taxon>
        <taxon>Sophophora</taxon>
    </lineage>
</organism>
<reference evidence="14 16" key="1">
    <citation type="journal article" date="2003" name="Mol. Cell. Biol.">
        <title>Two different Drosophila ADA2 homologues are present in distinct GCN5 histone acetyltransferase-containing complexes.</title>
        <authorList>
            <person name="Muratoglu S."/>
            <person name="Georgieva S."/>
            <person name="Papai G."/>
            <person name="Scheer E."/>
            <person name="Enunlu I."/>
            <person name="Komonyi O."/>
            <person name="Cserpan I."/>
            <person name="Lebedeva L."/>
            <person name="Nabirochkina E."/>
            <person name="Udvardy A."/>
            <person name="Tora L."/>
            <person name="Boros I."/>
        </authorList>
    </citation>
    <scope>NUCLEOTIDE SEQUENCE [MRNA] (ISOFORMS C AND E)</scope>
    <scope>FUNCTION</scope>
    <scope>INTERACTION WITH GCN5</scope>
    <scope>SUBCELLULAR LOCATION</scope>
    <scope>DEVELOPMENTAL STAGE</scope>
</reference>
<reference evidence="17" key="2">
    <citation type="journal article" date="2000" name="Science">
        <title>The genome sequence of Drosophila melanogaster.</title>
        <authorList>
            <person name="Adams M.D."/>
            <person name="Celniker S.E."/>
            <person name="Holt R.A."/>
            <person name="Evans C.A."/>
            <person name="Gocayne J.D."/>
            <person name="Amanatides P.G."/>
            <person name="Scherer S.E."/>
            <person name="Li P.W."/>
            <person name="Hoskins R.A."/>
            <person name="Galle R.F."/>
            <person name="George R.A."/>
            <person name="Lewis S.E."/>
            <person name="Richards S."/>
            <person name="Ashburner M."/>
            <person name="Henderson S.N."/>
            <person name="Sutton G.G."/>
            <person name="Wortman J.R."/>
            <person name="Yandell M.D."/>
            <person name="Zhang Q."/>
            <person name="Chen L.X."/>
            <person name="Brandon R.C."/>
            <person name="Rogers Y.-H.C."/>
            <person name="Blazej R.G."/>
            <person name="Champe M."/>
            <person name="Pfeiffer B.D."/>
            <person name="Wan K.H."/>
            <person name="Doyle C."/>
            <person name="Baxter E.G."/>
            <person name="Helt G."/>
            <person name="Nelson C.R."/>
            <person name="Miklos G.L.G."/>
            <person name="Abril J.F."/>
            <person name="Agbayani A."/>
            <person name="An H.-J."/>
            <person name="Andrews-Pfannkoch C."/>
            <person name="Baldwin D."/>
            <person name="Ballew R.M."/>
            <person name="Basu A."/>
            <person name="Baxendale J."/>
            <person name="Bayraktaroglu L."/>
            <person name="Beasley E.M."/>
            <person name="Beeson K.Y."/>
            <person name="Benos P.V."/>
            <person name="Berman B.P."/>
            <person name="Bhandari D."/>
            <person name="Bolshakov S."/>
            <person name="Borkova D."/>
            <person name="Botchan M.R."/>
            <person name="Bouck J."/>
            <person name="Brokstein P."/>
            <person name="Brottier P."/>
            <person name="Burtis K.C."/>
            <person name="Busam D.A."/>
            <person name="Butler H."/>
            <person name="Cadieu E."/>
            <person name="Center A."/>
            <person name="Chandra I."/>
            <person name="Cherry J.M."/>
            <person name="Cawley S."/>
            <person name="Dahlke C."/>
            <person name="Davenport L.B."/>
            <person name="Davies P."/>
            <person name="de Pablos B."/>
            <person name="Delcher A."/>
            <person name="Deng Z."/>
            <person name="Mays A.D."/>
            <person name="Dew I."/>
            <person name="Dietz S.M."/>
            <person name="Dodson K."/>
            <person name="Doup L.E."/>
            <person name="Downes M."/>
            <person name="Dugan-Rocha S."/>
            <person name="Dunkov B.C."/>
            <person name="Dunn P."/>
            <person name="Durbin K.J."/>
            <person name="Evangelista C.C."/>
            <person name="Ferraz C."/>
            <person name="Ferriera S."/>
            <person name="Fleischmann W."/>
            <person name="Fosler C."/>
            <person name="Gabrielian A.E."/>
            <person name="Garg N.S."/>
            <person name="Gelbart W.M."/>
            <person name="Glasser K."/>
            <person name="Glodek A."/>
            <person name="Gong F."/>
            <person name="Gorrell J.H."/>
            <person name="Gu Z."/>
            <person name="Guan P."/>
            <person name="Harris M."/>
            <person name="Harris N.L."/>
            <person name="Harvey D.A."/>
            <person name="Heiman T.J."/>
            <person name="Hernandez J.R."/>
            <person name="Houck J."/>
            <person name="Hostin D."/>
            <person name="Houston K.A."/>
            <person name="Howland T.J."/>
            <person name="Wei M.-H."/>
            <person name="Ibegwam C."/>
            <person name="Jalali M."/>
            <person name="Kalush F."/>
            <person name="Karpen G.H."/>
            <person name="Ke Z."/>
            <person name="Kennison J.A."/>
            <person name="Ketchum K.A."/>
            <person name="Kimmel B.E."/>
            <person name="Kodira C.D."/>
            <person name="Kraft C.L."/>
            <person name="Kravitz S."/>
            <person name="Kulp D."/>
            <person name="Lai Z."/>
            <person name="Lasko P."/>
            <person name="Lei Y."/>
            <person name="Levitsky A.A."/>
            <person name="Li J.H."/>
            <person name="Li Z."/>
            <person name="Liang Y."/>
            <person name="Lin X."/>
            <person name="Liu X."/>
            <person name="Mattei B."/>
            <person name="McIntosh T.C."/>
            <person name="McLeod M.P."/>
            <person name="McPherson D."/>
            <person name="Merkulov G."/>
            <person name="Milshina N.V."/>
            <person name="Mobarry C."/>
            <person name="Morris J."/>
            <person name="Moshrefi A."/>
            <person name="Mount S.M."/>
            <person name="Moy M."/>
            <person name="Murphy B."/>
            <person name="Murphy L."/>
            <person name="Muzny D.M."/>
            <person name="Nelson D.L."/>
            <person name="Nelson D.R."/>
            <person name="Nelson K.A."/>
            <person name="Nixon K."/>
            <person name="Nusskern D.R."/>
            <person name="Pacleb J.M."/>
            <person name="Palazzolo M."/>
            <person name="Pittman G.S."/>
            <person name="Pan S."/>
            <person name="Pollard J."/>
            <person name="Puri V."/>
            <person name="Reese M.G."/>
            <person name="Reinert K."/>
            <person name="Remington K."/>
            <person name="Saunders R.D.C."/>
            <person name="Scheeler F."/>
            <person name="Shen H."/>
            <person name="Shue B.C."/>
            <person name="Siden-Kiamos I."/>
            <person name="Simpson M."/>
            <person name="Skupski M.P."/>
            <person name="Smith T.J."/>
            <person name="Spier E."/>
            <person name="Spradling A.C."/>
            <person name="Stapleton M."/>
            <person name="Strong R."/>
            <person name="Sun E."/>
            <person name="Svirskas R."/>
            <person name="Tector C."/>
            <person name="Turner R."/>
            <person name="Venter E."/>
            <person name="Wang A.H."/>
            <person name="Wang X."/>
            <person name="Wang Z.-Y."/>
            <person name="Wassarman D.A."/>
            <person name="Weinstock G.M."/>
            <person name="Weissenbach J."/>
            <person name="Williams S.M."/>
            <person name="Woodage T."/>
            <person name="Worley K.C."/>
            <person name="Wu D."/>
            <person name="Yang S."/>
            <person name="Yao Q.A."/>
            <person name="Ye J."/>
            <person name="Yeh R.-F."/>
            <person name="Zaveri J.S."/>
            <person name="Zhan M."/>
            <person name="Zhang G."/>
            <person name="Zhao Q."/>
            <person name="Zheng L."/>
            <person name="Zheng X.H."/>
            <person name="Zhong F.N."/>
            <person name="Zhong W."/>
            <person name="Zhou X."/>
            <person name="Zhu S.C."/>
            <person name="Zhu X."/>
            <person name="Smith H.O."/>
            <person name="Gibbs R.A."/>
            <person name="Myers E.W."/>
            <person name="Rubin G.M."/>
            <person name="Venter J.C."/>
        </authorList>
    </citation>
    <scope>NUCLEOTIDE SEQUENCE [LARGE SCALE GENOMIC DNA]</scope>
    <source>
        <strain evidence="4">Berkeley</strain>
    </source>
</reference>
<reference evidence="14 17" key="3">
    <citation type="journal article" date="2002" name="Genome Biol.">
        <title>Annotation of the Drosophila melanogaster euchromatic genome: a systematic review.</title>
        <authorList>
            <person name="Misra S."/>
            <person name="Crosby M.A."/>
            <person name="Mungall C.J."/>
            <person name="Matthews B.B."/>
            <person name="Campbell K.S."/>
            <person name="Hradecky P."/>
            <person name="Huang Y."/>
            <person name="Kaminker J.S."/>
            <person name="Millburn G.H."/>
            <person name="Prochnik S.E."/>
            <person name="Smith C.D."/>
            <person name="Tupy J.L."/>
            <person name="Whitfield E.J."/>
            <person name="Bayraktaroglu L."/>
            <person name="Berman B.P."/>
            <person name="Bettencourt B.R."/>
            <person name="Celniker S.E."/>
            <person name="de Grey A.D.N.J."/>
            <person name="Drysdale R.A."/>
            <person name="Harris N.L."/>
            <person name="Richter J."/>
            <person name="Russo S."/>
            <person name="Schroeder A.J."/>
            <person name="Shu S.Q."/>
            <person name="Stapleton M."/>
            <person name="Yamada C."/>
            <person name="Ashburner M."/>
            <person name="Gelbart W.M."/>
            <person name="Rubin G.M."/>
            <person name="Lewis S.E."/>
        </authorList>
    </citation>
    <scope>GENOME REANNOTATION</scope>
    <scope>ALTERNATIVE SPLICING</scope>
    <source>
        <strain>Berkeley</strain>
    </source>
</reference>
<reference evidence="14 18" key="4">
    <citation type="submission" date="2006-10" db="EMBL/GenBank/DDBJ databases">
        <authorList>
            <person name="Stapleton M."/>
            <person name="Carlson J.W."/>
            <person name="Chavez C."/>
            <person name="Frise E."/>
            <person name="George R.A."/>
            <person name="Pacleb J.M."/>
            <person name="Park S."/>
            <person name="Wan K.H."/>
            <person name="Yu C."/>
            <person name="Celniker S.E."/>
        </authorList>
    </citation>
    <scope>NUCLEOTIDE SEQUENCE [LARGE SCALE MRNA] (ISOFORM C)</scope>
    <source>
        <strain>Berkeley</strain>
    </source>
</reference>
<reference evidence="14 15" key="5">
    <citation type="journal article" date="2003" name="Mol. Cell. Biol.">
        <title>Two Drosophila Ada2 homologues function in different multiprotein complexes.</title>
        <authorList>
            <person name="Kusch T."/>
            <person name="Guelman S."/>
            <person name="Abmayr S.M."/>
            <person name="Workman J.L."/>
        </authorList>
    </citation>
    <scope>NUCLEOTIDE SEQUENCE [MRNA] OF 75-562 (ISOFORMS A/B)</scope>
    <scope>FUNCTION</scope>
    <scope>SUBUNIT</scope>
    <scope>INTERACTION WITH GCN5 AND ADA3</scope>
    <scope>SUBCELLULAR LOCATION</scope>
    <scope>DEVELOPMENTAL STAGE</scope>
</reference>
<reference key="6">
    <citation type="journal article" date="2005" name="Mol. Cell. Biol.">
        <title>The homologous Drosophila transcriptional adaptors ADA2a and ADA2b are both required for normal development but have different functions.</title>
        <authorList>
            <person name="Pankotai T."/>
            <person name="Komonyi O."/>
            <person name="Bodai L."/>
            <person name="Ujfaludi Z."/>
            <person name="Muratoglu S."/>
            <person name="Ciurciu A."/>
            <person name="Tora L."/>
            <person name="Szabad J."/>
            <person name="Boros I."/>
        </authorList>
    </citation>
    <scope>DISRUPTION PHENOTYPE</scope>
</reference>
<reference key="7">
    <citation type="journal article" date="2008" name="Nat. Struct. Mol. Biol.">
        <title>ATAC is a double histone acetyltransferase complex that stimulates nucleosome sliding.</title>
        <authorList>
            <person name="Suganuma T."/>
            <person name="Gutierrez J.L."/>
            <person name="Li B."/>
            <person name="Florens L."/>
            <person name="Swanson S.K."/>
            <person name="Washburn M.P."/>
            <person name="Abmayr S.M."/>
            <person name="Workman J.L."/>
        </authorList>
    </citation>
    <scope>IDENTIFICATION BY MASS SPECTROMETRY</scope>
    <scope>IDENTIFICATION IN THE ATAC COMPLEX</scope>
    <scope>SUBCELLULAR LOCATION</scope>
</reference>
<reference key="8">
    <citation type="journal article" date="2010" name="Mol. Genet. Genomics">
        <title>The dissociable RPB4 subunit of RNA Pol II has vital functions in Drosophila.</title>
        <authorList>
            <person name="Pankotai T."/>
            <person name="Ujfaludi Z."/>
            <person name="Vamos E."/>
            <person name="Suri K."/>
            <person name="Boros I.M."/>
        </authorList>
    </citation>
    <scope>DEVELOPMENTAL STAGE</scope>
    <scope>INDUCTION</scope>
</reference>
<reference key="9">
    <citation type="journal article" date="2012" name="FEBS Lett.">
        <title>The C-terminal domains of ADA2 proteins determine selective incorporation into GCN5-containing complexes that target histone H3 or H4 for acetylation.</title>
        <authorList>
            <person name="Vamos E.E."/>
            <person name="Boros I.M."/>
        </authorList>
    </citation>
    <scope>FUNCTION</scope>
</reference>
<comment type="function">
    <text evidence="5 6 10">Component of the histone acetyltransferase (HAT) complex ATAC; predominantly involved in acetylation of histone H4, including at Lys-6 (H4K5ac) and Lys-13 (H4K12ac) (PubMed:12482983, PubMed:12697829, PubMed:22796493). May be part of several different complexes, including Gcn5-independent complexes involved in RNA polymerase II-dependent transcription (PubMed:12697829).</text>
</comment>
<comment type="subunit">
    <text evidence="5 6 8">Component of the Ada2a-containing (ATAC) complex composed of at least Ada2a, Atac1, Hcf, Ada3, Gcn5, Mocs2B, Charac-14, Atac3, Atac2, NC2beta and wds (PubMed:12482983, PubMed:12697829, PubMed:18327268). Component of a complex that does not include Gcn5 or Ada3 (PubMed:12697829).</text>
</comment>
<comment type="interaction">
    <interactant intactId="EBI-1246969">
        <id>Q7KSD8-4</id>
    </interactant>
    <interactant intactId="EBI-867710">
        <id>O76216</id>
        <label>Gcn5</label>
    </interactant>
    <organismsDiffer>false</organismsDiffer>
    <experiments>5</experiments>
</comment>
<comment type="subcellular location">
    <subcellularLocation>
        <location evidence="5 6 8">Nucleus</location>
    </subcellularLocation>
    <subcellularLocation>
        <location evidence="6">Chromosome</location>
    </subcellularLocation>
    <text evidence="6">Predominantly localizes to decondensed chromosome puffs enriched in phosphorylated RNA polymerase II, but also colocalizes with Ada3 and Gcn5 in some euchromatic regions flanking chromosome puffs.</text>
</comment>
<comment type="alternative products">
    <event type="alternative splicing"/>
    <isoform>
        <id>Q7KSD8-1</id>
        <name evidence="4">B</name>
        <sequence type="displayed"/>
    </isoform>
    <isoform>
        <id>Q7KSD8-2</id>
        <name evidence="4">A</name>
        <sequence type="described" ref="VSP_052368"/>
    </isoform>
    <isoform>
        <id>Q7KSD8-3</id>
        <name evidence="5">C</name>
        <name evidence="5">ADA2A-SV2</name>
        <sequence type="described" ref="VSP_052368 VSP_052369"/>
    </isoform>
    <isoform>
        <id>Q7KSD8-4</id>
        <name evidence="5">E</name>
        <name evidence="5">ADA2A-SV1</name>
        <sequence type="described" ref="VSP_052369"/>
    </isoform>
    <isoform>
        <id>Q9VEA5-1</id>
        <name evidence="4">D</name>
        <sequence type="external"/>
    </isoform>
</comment>
<comment type="developmental stage">
    <text evidence="5 6 9">Expressed both maternally and zygotically throughout development with lowest expression levels in L2 and L3 larvae, and highest expression levels during pupal development (PubMed:12482983, PubMed:12697829). Highly expressed in all developmental stages, though its abundance decreases in L2 larvae then returns to high levels in pupae (PubMed:19921261).</text>
</comment>
<comment type="induction">
    <text evidence="9">Under heat shock conditions, strongly down-regulated in L2 stage larvae with levels remaining low during the L3 and pupal stages. In second instar larvae, down-regulated 1 hr after starvation and then appears to return to normal expression levels 4 hr after nutritional starvation.</text>
</comment>
<comment type="disruption phenotype">
    <text evidence="7">Late-larval lethal.</text>
</comment>
<comment type="miscellaneous">
    <text evidence="9">This protein is produced by a bicistronic gene which also produces the Polr2D/Rpb4 protein by alternative splicing.</text>
</comment>
<sequence>MSFMNPVDMVDEDAADLQFPKVALLHIFTTLNCLFAVEPLGPQVKRFIHAHQNEHTRNSMVLYNPHTLHRYLEEMEEKTRDQNSSVPSATKDANRCATCRCSLTEPYIKCSECLDTLLCLQCFSRGKEAFSHRNNHAYIIVRDNIQVFADEPHWTARDERILLKTLRTHGYGNWEAVSQALDQRHEPAEVRRHYHDCYFGGIFERLLNLKHARDSYVPERMPYVFKMRSLDPPRHDDIASMQFRLSAGYRCARGDFDTPYDTSAESLLSIMVDHRGRDDDNEASESEFEREVTEELQLGLVRAYNNRLRERQRRYKIMRQHGLIMPNRTVSWISKYVHAFGSDASCMRFLGFMQICPDPIKFDMLLESLRYYRELHSQLHKLYDLREHGVRTLSGAKLYARLSKERQQAQRDYSRLKQTDAFDWQQLVQHYESNRSGDPGPLAINSKLYVMNTRRKASPIEIGGGKHFTHCLTPTEYNFSLIPDLPGYSKLDDGERKLCSVARLVPQSYLDYKNQLVTEQAKLGYLRLADARRLIKIDVNKTRQIYDFLLEHGHISRPPSYG</sequence>
<gene>
    <name evidence="12 19" type="primary">Ada2a</name>
    <name evidence="17" type="synonym">Rpb4</name>
    <name evidence="19" type="ORF">CG43663</name>
</gene>
<name>TAD2A_DROME</name>
<dbReference type="EMBL" id="AF544017">
    <property type="protein sequence ID" value="AAN88029.1"/>
    <property type="molecule type" value="mRNA"/>
</dbReference>
<dbReference type="EMBL" id="AF544018">
    <property type="protein sequence ID" value="AAN88030.1"/>
    <property type="molecule type" value="mRNA"/>
</dbReference>
<dbReference type="EMBL" id="AE014297">
    <property type="protein sequence ID" value="AAN13767.1"/>
    <property type="molecule type" value="Genomic_DNA"/>
</dbReference>
<dbReference type="EMBL" id="AE014297">
    <property type="protein sequence ID" value="AAS65168.1"/>
    <property type="molecule type" value="Genomic_DNA"/>
</dbReference>
<dbReference type="EMBL" id="AE014297">
    <property type="protein sequence ID" value="AAX52962.1"/>
    <property type="molecule type" value="Genomic_DNA"/>
</dbReference>
<dbReference type="EMBL" id="AE014297">
    <property type="protein sequence ID" value="AAX52963.1"/>
    <property type="molecule type" value="Genomic_DNA"/>
</dbReference>
<dbReference type="EMBL" id="BT022166">
    <property type="protein sequence ID" value="AAY51560.1"/>
    <property type="molecule type" value="mRNA"/>
</dbReference>
<dbReference type="EMBL" id="BT025205">
    <property type="protein sequence ID" value="ABF17896.1"/>
    <property type="molecule type" value="mRNA"/>
</dbReference>
<dbReference type="EMBL" id="AY142216">
    <property type="protein sequence ID" value="AAN52144.1"/>
    <property type="molecule type" value="mRNA"/>
</dbReference>
<dbReference type="RefSeq" id="NP_001014634.1">
    <molecule id="Q7KSD8-4"/>
    <property type="nucleotide sequence ID" value="NM_001014634.3"/>
</dbReference>
<dbReference type="RefSeq" id="NP_001014635.1">
    <molecule id="Q7KSD8-2"/>
    <property type="nucleotide sequence ID" value="NM_001014635.3"/>
</dbReference>
<dbReference type="RefSeq" id="NP_001014636.1">
    <molecule id="Q7KSD8-1"/>
    <property type="nucleotide sequence ID" value="NM_001014636.3"/>
</dbReference>
<dbReference type="RefSeq" id="NP_001014637.1">
    <molecule id="Q7KSD8-3"/>
    <property type="nucleotide sequence ID" value="NM_001014637.3"/>
</dbReference>
<dbReference type="RefSeq" id="NP_001163645.1">
    <molecule id="Q7KSD8-3"/>
    <property type="nucleotide sequence ID" value="NM_001170174.2"/>
</dbReference>
<dbReference type="SMR" id="Q7KSD8"/>
<dbReference type="BioGRID" id="77382">
    <property type="interactions" value="19"/>
</dbReference>
<dbReference type="ComplexPortal" id="CPX-2742">
    <property type="entry name" value="ATAC histone acetyltransferase complex"/>
</dbReference>
<dbReference type="FunCoup" id="Q7KSD8">
    <property type="interactions" value="571"/>
</dbReference>
<dbReference type="IntAct" id="Q7KSD8">
    <property type="interactions" value="18"/>
</dbReference>
<dbReference type="STRING" id="7227.FBpp0302532"/>
<dbReference type="PaxDb" id="7227-FBpp0302532"/>
<dbReference type="EnsemblMetazoa" id="FBtr0310380">
    <molecule id="Q7KSD8-2"/>
    <property type="protein sequence ID" value="FBpp0302531"/>
    <property type="gene ID" value="FBgn0263738"/>
</dbReference>
<dbReference type="EnsemblMetazoa" id="FBtr0310381">
    <molecule id="Q7KSD8-1"/>
    <property type="protein sequence ID" value="FBpp0302532"/>
    <property type="gene ID" value="FBgn0263738"/>
</dbReference>
<dbReference type="EnsemblMetazoa" id="FBtr0310382">
    <molecule id="Q7KSD8-3"/>
    <property type="protein sequence ID" value="FBpp0302533"/>
    <property type="gene ID" value="FBgn0263738"/>
</dbReference>
<dbReference type="EnsemblMetazoa" id="FBtr0310383">
    <molecule id="Q7KSD8-4"/>
    <property type="protein sequence ID" value="FBpp0302534"/>
    <property type="gene ID" value="FBgn0263738"/>
</dbReference>
<dbReference type="EnsemblMetazoa" id="FBtr0310384">
    <molecule id="Q7KSD8-3"/>
    <property type="protein sequence ID" value="FBpp0302535"/>
    <property type="gene ID" value="FBgn0263738"/>
</dbReference>
<dbReference type="GeneID" id="326128"/>
<dbReference type="KEGG" id="dme:Dmel_CG43663"/>
<dbReference type="UCSC" id="CG33520-RA">
    <molecule id="Q7KSD8-1"/>
    <property type="organism name" value="d. melanogaster"/>
</dbReference>
<dbReference type="AGR" id="FB:FBgn0263738"/>
<dbReference type="CTD" id="373884"/>
<dbReference type="FlyBase" id="FBgn0263738">
    <property type="gene designation" value="Ada2a"/>
</dbReference>
<dbReference type="VEuPathDB" id="VectorBase:FBgn0263738"/>
<dbReference type="eggNOG" id="KOG0457">
    <property type="taxonomic scope" value="Eukaryota"/>
</dbReference>
<dbReference type="GeneTree" id="ENSGT00940000156751"/>
<dbReference type="HOGENOM" id="CLU_018273_3_0_1"/>
<dbReference type="InParanoid" id="Q7KSD8"/>
<dbReference type="OMA" id="YNGNHRP"/>
<dbReference type="OrthoDB" id="2186918at2759"/>
<dbReference type="PhylomeDB" id="Q7KSD8"/>
<dbReference type="SignaLink" id="Q7KSD8"/>
<dbReference type="BioGRID-ORCS" id="326128">
    <property type="hits" value="0 hits in 3 CRISPR screens"/>
</dbReference>
<dbReference type="GenomeRNAi" id="326128"/>
<dbReference type="Proteomes" id="UP000000803">
    <property type="component" value="Chromosome 3R"/>
</dbReference>
<dbReference type="Bgee" id="FBgn0263738">
    <property type="expression patterns" value="Expressed in enteroblast (Drosophila) in digestive tract and 37 other cell types or tissues"/>
</dbReference>
<dbReference type="ExpressionAtlas" id="Q7KSD8">
    <property type="expression patterns" value="baseline and differential"/>
</dbReference>
<dbReference type="GO" id="GO:0140672">
    <property type="term" value="C:ATAC complex"/>
    <property type="evidence" value="ECO:0000314"/>
    <property type="project" value="FlyBase"/>
</dbReference>
<dbReference type="GO" id="GO:0000791">
    <property type="term" value="C:euchromatin"/>
    <property type="evidence" value="ECO:0000314"/>
    <property type="project" value="FlyBase"/>
</dbReference>
<dbReference type="GO" id="GO:0005634">
    <property type="term" value="C:nucleus"/>
    <property type="evidence" value="ECO:0000314"/>
    <property type="project" value="UniProtKB"/>
</dbReference>
<dbReference type="GO" id="GO:0070461">
    <property type="term" value="C:SAGA-type complex"/>
    <property type="evidence" value="ECO:0000318"/>
    <property type="project" value="GO_Central"/>
</dbReference>
<dbReference type="GO" id="GO:0003682">
    <property type="term" value="F:chromatin binding"/>
    <property type="evidence" value="ECO:0000318"/>
    <property type="project" value="GO_Central"/>
</dbReference>
<dbReference type="GO" id="GO:0003677">
    <property type="term" value="F:DNA binding"/>
    <property type="evidence" value="ECO:0007669"/>
    <property type="project" value="UniProtKB-KW"/>
</dbReference>
<dbReference type="GO" id="GO:0003713">
    <property type="term" value="F:transcription coactivator activity"/>
    <property type="evidence" value="ECO:0000318"/>
    <property type="project" value="GO_Central"/>
</dbReference>
<dbReference type="GO" id="GO:0008270">
    <property type="term" value="F:zinc ion binding"/>
    <property type="evidence" value="ECO:0007669"/>
    <property type="project" value="UniProtKB-KW"/>
</dbReference>
<dbReference type="GO" id="GO:0006338">
    <property type="term" value="P:chromatin remodeling"/>
    <property type="evidence" value="ECO:0000318"/>
    <property type="project" value="GO_Central"/>
</dbReference>
<dbReference type="GO" id="GO:0006357">
    <property type="term" value="P:regulation of transcription by RNA polymerase II"/>
    <property type="evidence" value="ECO:0000314"/>
    <property type="project" value="UniProtKB"/>
</dbReference>
<dbReference type="CDD" id="cd00167">
    <property type="entry name" value="SANT"/>
    <property type="match status" value="1"/>
</dbReference>
<dbReference type="CDD" id="cd02335">
    <property type="entry name" value="ZZ_ADA2"/>
    <property type="match status" value="1"/>
</dbReference>
<dbReference type="FunFam" id="1.10.10.10:FF:000087">
    <property type="entry name" value="Transcriptional adapter 2"/>
    <property type="match status" value="1"/>
</dbReference>
<dbReference type="FunFam" id="1.10.10.60:FF:000752">
    <property type="entry name" value="Transcriptional adapter 2A"/>
    <property type="match status" value="1"/>
</dbReference>
<dbReference type="Gene3D" id="3.30.60.90">
    <property type="match status" value="1"/>
</dbReference>
<dbReference type="Gene3D" id="1.10.10.60">
    <property type="entry name" value="Homeodomain-like"/>
    <property type="match status" value="1"/>
</dbReference>
<dbReference type="Gene3D" id="1.10.10.10">
    <property type="entry name" value="Winged helix-like DNA-binding domain superfamily/Winged helix DNA-binding domain"/>
    <property type="match status" value="1"/>
</dbReference>
<dbReference type="InterPro" id="IPR041983">
    <property type="entry name" value="ADA2-like_ZZ"/>
</dbReference>
<dbReference type="InterPro" id="IPR016827">
    <property type="entry name" value="Ada2/TADA2"/>
</dbReference>
<dbReference type="InterPro" id="IPR009057">
    <property type="entry name" value="Homeodomain-like_sf"/>
</dbReference>
<dbReference type="InterPro" id="IPR001005">
    <property type="entry name" value="SANT/Myb"/>
</dbReference>
<dbReference type="InterPro" id="IPR007526">
    <property type="entry name" value="SWIRM"/>
</dbReference>
<dbReference type="InterPro" id="IPR055141">
    <property type="entry name" value="TADA2A_B-like_dom"/>
</dbReference>
<dbReference type="InterPro" id="IPR036388">
    <property type="entry name" value="WH-like_DNA-bd_sf"/>
</dbReference>
<dbReference type="InterPro" id="IPR000433">
    <property type="entry name" value="Znf_ZZ"/>
</dbReference>
<dbReference type="InterPro" id="IPR043145">
    <property type="entry name" value="Znf_ZZ_sf"/>
</dbReference>
<dbReference type="PANTHER" id="PTHR12374:SF20">
    <property type="entry name" value="TRANSCRIPTIONAL ADAPTER 2-ALPHA"/>
    <property type="match status" value="1"/>
</dbReference>
<dbReference type="PANTHER" id="PTHR12374">
    <property type="entry name" value="TRANSCRIPTIONAL ADAPTOR 2 ADA2 -RELATED"/>
    <property type="match status" value="1"/>
</dbReference>
<dbReference type="Pfam" id="PF00249">
    <property type="entry name" value="Myb_DNA-binding"/>
    <property type="match status" value="1"/>
</dbReference>
<dbReference type="Pfam" id="PF04433">
    <property type="entry name" value="SWIRM"/>
    <property type="match status" value="1"/>
</dbReference>
<dbReference type="Pfam" id="PF22941">
    <property type="entry name" value="TADA2A-like_3rd"/>
    <property type="match status" value="1"/>
</dbReference>
<dbReference type="Pfam" id="PF25299">
    <property type="entry name" value="ZZ_ADA2"/>
    <property type="match status" value="1"/>
</dbReference>
<dbReference type="PIRSF" id="PIRSF025024">
    <property type="entry name" value="Transcriptional_adaptor_2"/>
    <property type="match status" value="1"/>
</dbReference>
<dbReference type="SUPFAM" id="SSF46689">
    <property type="entry name" value="Homeodomain-like"/>
    <property type="match status" value="2"/>
</dbReference>
<dbReference type="SUPFAM" id="SSF57850">
    <property type="entry name" value="RING/U-box"/>
    <property type="match status" value="1"/>
</dbReference>
<dbReference type="PROSITE" id="PS50934">
    <property type="entry name" value="SWIRM"/>
    <property type="match status" value="1"/>
</dbReference>
<dbReference type="PROSITE" id="PS50135">
    <property type="entry name" value="ZF_ZZ_2"/>
    <property type="match status" value="1"/>
</dbReference>
<keyword id="KW-0025">Alternative splicing</keyword>
<keyword id="KW-0158">Chromosome</keyword>
<keyword id="KW-0238">DNA-binding</keyword>
<keyword id="KW-0479">Metal-binding</keyword>
<keyword id="KW-0539">Nucleus</keyword>
<keyword id="KW-1185">Reference proteome</keyword>
<keyword id="KW-0804">Transcription</keyword>
<keyword id="KW-0805">Transcription regulation</keyword>
<keyword id="KW-0862">Zinc</keyword>
<keyword id="KW-0863">Zinc-finger</keyword>